<keyword id="KW-0963">Cytoplasm</keyword>
<keyword id="KW-0456">Lyase</keyword>
<keyword id="KW-1185">Reference proteome</keyword>
<keyword id="KW-0704">Schiff base</keyword>
<proteinExistence type="inferred from homology"/>
<reference key="1">
    <citation type="journal article" date="2008" name="Infect. Immun.">
        <title>Genome of Mycoplasma arthritidis.</title>
        <authorList>
            <person name="Dybvig K."/>
            <person name="Zuhua C."/>
            <person name="Lao P."/>
            <person name="Jordan D.S."/>
            <person name="French C.T."/>
            <person name="Tu A.H."/>
            <person name="Loraine A.E."/>
        </authorList>
    </citation>
    <scope>NUCLEOTIDE SEQUENCE [LARGE SCALE GENOMIC DNA]</scope>
    <source>
        <strain>158L3-1</strain>
    </source>
</reference>
<evidence type="ECO:0000255" key="1">
    <source>
        <dbReference type="HAMAP-Rule" id="MF_00114"/>
    </source>
</evidence>
<dbReference type="EC" id="4.1.2.4" evidence="1"/>
<dbReference type="EMBL" id="CP001047">
    <property type="protein sequence ID" value="ACF07147.1"/>
    <property type="molecule type" value="Genomic_DNA"/>
</dbReference>
<dbReference type="RefSeq" id="WP_012498104.1">
    <property type="nucleotide sequence ID" value="NC_011025.1"/>
</dbReference>
<dbReference type="SMR" id="B3PM95"/>
<dbReference type="STRING" id="243272.MARTH_orf239"/>
<dbReference type="KEGG" id="mat:MARTH_orf239"/>
<dbReference type="eggNOG" id="COG0274">
    <property type="taxonomic scope" value="Bacteria"/>
</dbReference>
<dbReference type="HOGENOM" id="CLU_053595_0_1_14"/>
<dbReference type="UniPathway" id="UPA00002">
    <property type="reaction ID" value="UER00468"/>
</dbReference>
<dbReference type="Proteomes" id="UP000008812">
    <property type="component" value="Chromosome"/>
</dbReference>
<dbReference type="GO" id="GO:0005737">
    <property type="term" value="C:cytoplasm"/>
    <property type="evidence" value="ECO:0007669"/>
    <property type="project" value="UniProtKB-SubCell"/>
</dbReference>
<dbReference type="GO" id="GO:0004139">
    <property type="term" value="F:deoxyribose-phosphate aldolase activity"/>
    <property type="evidence" value="ECO:0007669"/>
    <property type="project" value="UniProtKB-UniRule"/>
</dbReference>
<dbReference type="GO" id="GO:0006018">
    <property type="term" value="P:2-deoxyribose 1-phosphate catabolic process"/>
    <property type="evidence" value="ECO:0007669"/>
    <property type="project" value="UniProtKB-UniRule"/>
</dbReference>
<dbReference type="GO" id="GO:0016052">
    <property type="term" value="P:carbohydrate catabolic process"/>
    <property type="evidence" value="ECO:0007669"/>
    <property type="project" value="TreeGrafter"/>
</dbReference>
<dbReference type="GO" id="GO:0009264">
    <property type="term" value="P:deoxyribonucleotide catabolic process"/>
    <property type="evidence" value="ECO:0007669"/>
    <property type="project" value="InterPro"/>
</dbReference>
<dbReference type="CDD" id="cd00959">
    <property type="entry name" value="DeoC"/>
    <property type="match status" value="1"/>
</dbReference>
<dbReference type="FunFam" id="3.20.20.70:FF:000044">
    <property type="entry name" value="Deoxyribose-phosphate aldolase"/>
    <property type="match status" value="1"/>
</dbReference>
<dbReference type="Gene3D" id="3.20.20.70">
    <property type="entry name" value="Aldolase class I"/>
    <property type="match status" value="1"/>
</dbReference>
<dbReference type="HAMAP" id="MF_00114">
    <property type="entry name" value="DeoC_type1"/>
    <property type="match status" value="1"/>
</dbReference>
<dbReference type="InterPro" id="IPR013785">
    <property type="entry name" value="Aldolase_TIM"/>
</dbReference>
<dbReference type="InterPro" id="IPR011343">
    <property type="entry name" value="DeoC"/>
</dbReference>
<dbReference type="InterPro" id="IPR002915">
    <property type="entry name" value="DeoC/FbaB/LacD_aldolase"/>
</dbReference>
<dbReference type="InterPro" id="IPR028581">
    <property type="entry name" value="DeoC_typeI"/>
</dbReference>
<dbReference type="NCBIfam" id="TIGR00126">
    <property type="entry name" value="deoC"/>
    <property type="match status" value="1"/>
</dbReference>
<dbReference type="PANTHER" id="PTHR10889">
    <property type="entry name" value="DEOXYRIBOSE-PHOSPHATE ALDOLASE"/>
    <property type="match status" value="1"/>
</dbReference>
<dbReference type="PANTHER" id="PTHR10889:SF1">
    <property type="entry name" value="DEOXYRIBOSE-PHOSPHATE ALDOLASE"/>
    <property type="match status" value="1"/>
</dbReference>
<dbReference type="Pfam" id="PF01791">
    <property type="entry name" value="DeoC"/>
    <property type="match status" value="1"/>
</dbReference>
<dbReference type="PIRSF" id="PIRSF001357">
    <property type="entry name" value="DeoC"/>
    <property type="match status" value="1"/>
</dbReference>
<dbReference type="SMART" id="SM01133">
    <property type="entry name" value="DeoC"/>
    <property type="match status" value="1"/>
</dbReference>
<dbReference type="SUPFAM" id="SSF51569">
    <property type="entry name" value="Aldolase"/>
    <property type="match status" value="1"/>
</dbReference>
<sequence>MKYNKLVDHTLLAPQATVHDIDKLIDEAIKYDFKSVCIAPTWIKHAKEKLAKSDVLVCTVIGFPLGSNATSVKVYETKIAIAHGADEIDMVINIGRFKNKEYEFVLNEIKAIKEECGSKTLKVIVETALLTNEEIAKVTEIVMQSGAEFIKTSTGFSYRGASFEDVEIMKRVAQDKLLIKASGGIKVGDDAIKMVELGANRLGMSKSIQIMEDLEKK</sequence>
<gene>
    <name evidence="1" type="primary">deoC</name>
    <name type="ordered locus">MARTH_orf239</name>
</gene>
<feature type="chain" id="PRO_1000094851" description="Deoxyribose-phosphate aldolase">
    <location>
        <begin position="1"/>
        <end position="217"/>
    </location>
</feature>
<feature type="active site" description="Proton donor/acceptor" evidence="1">
    <location>
        <position position="89"/>
    </location>
</feature>
<feature type="active site" description="Schiff-base intermediate with acetaldehyde" evidence="1">
    <location>
        <position position="151"/>
    </location>
</feature>
<feature type="active site" description="Proton donor/acceptor" evidence="1">
    <location>
        <position position="180"/>
    </location>
</feature>
<protein>
    <recommendedName>
        <fullName evidence="1">Deoxyribose-phosphate aldolase</fullName>
        <shortName evidence="1">DERA</shortName>
        <ecNumber evidence="1">4.1.2.4</ecNumber>
    </recommendedName>
    <alternativeName>
        <fullName evidence="1">2-deoxy-D-ribose 5-phosphate aldolase</fullName>
    </alternativeName>
    <alternativeName>
        <fullName evidence="1">Phosphodeoxyriboaldolase</fullName>
        <shortName evidence="1">Deoxyriboaldolase</shortName>
    </alternativeName>
</protein>
<accession>B3PM95</accession>
<comment type="function">
    <text evidence="1">Catalyzes a reversible aldol reaction between acetaldehyde and D-glyceraldehyde 3-phosphate to generate 2-deoxy-D-ribose 5-phosphate.</text>
</comment>
<comment type="catalytic activity">
    <reaction evidence="1">
        <text>2-deoxy-D-ribose 5-phosphate = D-glyceraldehyde 3-phosphate + acetaldehyde</text>
        <dbReference type="Rhea" id="RHEA:12821"/>
        <dbReference type="ChEBI" id="CHEBI:15343"/>
        <dbReference type="ChEBI" id="CHEBI:59776"/>
        <dbReference type="ChEBI" id="CHEBI:62877"/>
        <dbReference type="EC" id="4.1.2.4"/>
    </reaction>
</comment>
<comment type="pathway">
    <text evidence="1">Carbohydrate degradation; 2-deoxy-D-ribose 1-phosphate degradation; D-glyceraldehyde 3-phosphate and acetaldehyde from 2-deoxy-alpha-D-ribose 1-phosphate: step 2/2.</text>
</comment>
<comment type="subcellular location">
    <subcellularLocation>
        <location evidence="1">Cytoplasm</location>
    </subcellularLocation>
</comment>
<comment type="similarity">
    <text evidence="1">Belongs to the DeoC/FbaB aldolase family. DeoC type 1 subfamily.</text>
</comment>
<name>DEOC_META1</name>
<organism>
    <name type="scientific">Metamycoplasma arthritidis (strain 158L3-1)</name>
    <name type="common">Mycoplasma arthritidis</name>
    <dbReference type="NCBI Taxonomy" id="243272"/>
    <lineage>
        <taxon>Bacteria</taxon>
        <taxon>Bacillati</taxon>
        <taxon>Mycoplasmatota</taxon>
        <taxon>Mycoplasmoidales</taxon>
        <taxon>Metamycoplasmataceae</taxon>
        <taxon>Metamycoplasma</taxon>
    </lineage>
</organism>